<feature type="chain" id="PRO_1000118876" description="Shikimate dehydrogenase (NADP(+))">
    <location>
        <begin position="1"/>
        <end position="272"/>
    </location>
</feature>
<feature type="active site" description="Proton acceptor" evidence="1">
    <location>
        <position position="65"/>
    </location>
</feature>
<feature type="binding site" evidence="1">
    <location>
        <begin position="14"/>
        <end position="16"/>
    </location>
    <ligand>
        <name>shikimate</name>
        <dbReference type="ChEBI" id="CHEBI:36208"/>
    </ligand>
</feature>
<feature type="binding site" evidence="1">
    <location>
        <position position="61"/>
    </location>
    <ligand>
        <name>shikimate</name>
        <dbReference type="ChEBI" id="CHEBI:36208"/>
    </ligand>
</feature>
<feature type="binding site" evidence="1">
    <location>
        <position position="77"/>
    </location>
    <ligand>
        <name>NADP(+)</name>
        <dbReference type="ChEBI" id="CHEBI:58349"/>
    </ligand>
</feature>
<feature type="binding site" evidence="1">
    <location>
        <position position="86"/>
    </location>
    <ligand>
        <name>shikimate</name>
        <dbReference type="ChEBI" id="CHEBI:36208"/>
    </ligand>
</feature>
<feature type="binding site" evidence="1">
    <location>
        <position position="102"/>
    </location>
    <ligand>
        <name>shikimate</name>
        <dbReference type="ChEBI" id="CHEBI:36208"/>
    </ligand>
</feature>
<feature type="binding site" evidence="1">
    <location>
        <begin position="126"/>
        <end position="130"/>
    </location>
    <ligand>
        <name>NADP(+)</name>
        <dbReference type="ChEBI" id="CHEBI:58349"/>
    </ligand>
</feature>
<feature type="binding site" evidence="1">
    <location>
        <begin position="149"/>
        <end position="154"/>
    </location>
    <ligand>
        <name>NADP(+)</name>
        <dbReference type="ChEBI" id="CHEBI:58349"/>
    </ligand>
</feature>
<feature type="binding site" evidence="1">
    <location>
        <position position="213"/>
    </location>
    <ligand>
        <name>NADP(+)</name>
        <dbReference type="ChEBI" id="CHEBI:58349"/>
    </ligand>
</feature>
<feature type="binding site" evidence="1">
    <location>
        <position position="215"/>
    </location>
    <ligand>
        <name>shikimate</name>
        <dbReference type="ChEBI" id="CHEBI:36208"/>
    </ligand>
</feature>
<feature type="binding site" evidence="1">
    <location>
        <position position="237"/>
    </location>
    <ligand>
        <name>NADP(+)</name>
        <dbReference type="ChEBI" id="CHEBI:58349"/>
    </ligand>
</feature>
<sequence>METYAVFGNPIAHSKSPFIHQQFAQQLNIEHPYGRVLAPINDFINTLNAFFRAGGKGANVTVPFKEEAFARADELTERAALAGAVNTLKRLEDGRLLGDNTDGIGLLSDLERLSFIRPGLRILLIGAGGASRGVLLPLLSLDCAVTITNRTVSRAEELAKLFAHTGSIQALGMDELEGHEFDLIINATSSGISGDIPAIPSSLIHPGIYCYDMFYQKGKTPFLAWCEQRGSKRNADGLGMLVAQAAHAFLLWHGVLPDVEPVIKQLQEELSA</sequence>
<gene>
    <name evidence="1" type="primary">aroE</name>
    <name type="ordered locus">ECIAI1_3431</name>
</gene>
<organism>
    <name type="scientific">Escherichia coli O8 (strain IAI1)</name>
    <dbReference type="NCBI Taxonomy" id="585034"/>
    <lineage>
        <taxon>Bacteria</taxon>
        <taxon>Pseudomonadati</taxon>
        <taxon>Pseudomonadota</taxon>
        <taxon>Gammaproteobacteria</taxon>
        <taxon>Enterobacterales</taxon>
        <taxon>Enterobacteriaceae</taxon>
        <taxon>Escherichia</taxon>
    </lineage>
</organism>
<protein>
    <recommendedName>
        <fullName evidence="1">Shikimate dehydrogenase (NADP(+))</fullName>
        <shortName evidence="1">SDH</shortName>
        <ecNumber evidence="1">1.1.1.25</ecNumber>
    </recommendedName>
</protein>
<accession>B7M0Y7</accession>
<comment type="function">
    <text evidence="1">Involved in the biosynthesis of the chorismate, which leads to the biosynthesis of aromatic amino acids. Catalyzes the reversible NADPH linked reduction of 3-dehydroshikimate (DHSA) to yield shikimate (SA).</text>
</comment>
<comment type="catalytic activity">
    <reaction evidence="1">
        <text>shikimate + NADP(+) = 3-dehydroshikimate + NADPH + H(+)</text>
        <dbReference type="Rhea" id="RHEA:17737"/>
        <dbReference type="ChEBI" id="CHEBI:15378"/>
        <dbReference type="ChEBI" id="CHEBI:16630"/>
        <dbReference type="ChEBI" id="CHEBI:36208"/>
        <dbReference type="ChEBI" id="CHEBI:57783"/>
        <dbReference type="ChEBI" id="CHEBI:58349"/>
        <dbReference type="EC" id="1.1.1.25"/>
    </reaction>
</comment>
<comment type="pathway">
    <text evidence="1">Metabolic intermediate biosynthesis; chorismate biosynthesis; chorismate from D-erythrose 4-phosphate and phosphoenolpyruvate: step 4/7.</text>
</comment>
<comment type="subunit">
    <text evidence="1">Homodimer.</text>
</comment>
<comment type="similarity">
    <text evidence="1">Belongs to the shikimate dehydrogenase family.</text>
</comment>
<keyword id="KW-0028">Amino-acid biosynthesis</keyword>
<keyword id="KW-0057">Aromatic amino acid biosynthesis</keyword>
<keyword id="KW-0521">NADP</keyword>
<keyword id="KW-0560">Oxidoreductase</keyword>
<dbReference type="EC" id="1.1.1.25" evidence="1"/>
<dbReference type="EMBL" id="CU928160">
    <property type="protein sequence ID" value="CAR00233.1"/>
    <property type="molecule type" value="Genomic_DNA"/>
</dbReference>
<dbReference type="RefSeq" id="WP_000451211.1">
    <property type="nucleotide sequence ID" value="NC_011741.1"/>
</dbReference>
<dbReference type="SMR" id="B7M0Y7"/>
<dbReference type="GeneID" id="75204136"/>
<dbReference type="KEGG" id="ecr:ECIAI1_3431"/>
<dbReference type="HOGENOM" id="CLU_044063_2_1_6"/>
<dbReference type="UniPathway" id="UPA00053">
    <property type="reaction ID" value="UER00087"/>
</dbReference>
<dbReference type="GO" id="GO:0005829">
    <property type="term" value="C:cytosol"/>
    <property type="evidence" value="ECO:0007669"/>
    <property type="project" value="TreeGrafter"/>
</dbReference>
<dbReference type="GO" id="GO:0050661">
    <property type="term" value="F:NADP binding"/>
    <property type="evidence" value="ECO:0007669"/>
    <property type="project" value="InterPro"/>
</dbReference>
<dbReference type="GO" id="GO:0004764">
    <property type="term" value="F:shikimate 3-dehydrogenase (NADP+) activity"/>
    <property type="evidence" value="ECO:0007669"/>
    <property type="project" value="UniProtKB-UniRule"/>
</dbReference>
<dbReference type="GO" id="GO:0008652">
    <property type="term" value="P:amino acid biosynthetic process"/>
    <property type="evidence" value="ECO:0007669"/>
    <property type="project" value="UniProtKB-KW"/>
</dbReference>
<dbReference type="GO" id="GO:0009073">
    <property type="term" value="P:aromatic amino acid family biosynthetic process"/>
    <property type="evidence" value="ECO:0007669"/>
    <property type="project" value="UniProtKB-KW"/>
</dbReference>
<dbReference type="GO" id="GO:0009423">
    <property type="term" value="P:chorismate biosynthetic process"/>
    <property type="evidence" value="ECO:0007669"/>
    <property type="project" value="UniProtKB-UniRule"/>
</dbReference>
<dbReference type="GO" id="GO:0019632">
    <property type="term" value="P:shikimate metabolic process"/>
    <property type="evidence" value="ECO:0007669"/>
    <property type="project" value="InterPro"/>
</dbReference>
<dbReference type="CDD" id="cd01065">
    <property type="entry name" value="NAD_bind_Shikimate_DH"/>
    <property type="match status" value="1"/>
</dbReference>
<dbReference type="FunFam" id="3.40.50.10860:FF:000006">
    <property type="entry name" value="Shikimate dehydrogenase (NADP(+))"/>
    <property type="match status" value="1"/>
</dbReference>
<dbReference type="FunFam" id="3.40.50.720:FF:000104">
    <property type="entry name" value="Shikimate dehydrogenase (NADP(+))"/>
    <property type="match status" value="1"/>
</dbReference>
<dbReference type="Gene3D" id="3.40.50.10860">
    <property type="entry name" value="Leucine Dehydrogenase, chain A, domain 1"/>
    <property type="match status" value="1"/>
</dbReference>
<dbReference type="Gene3D" id="3.40.50.720">
    <property type="entry name" value="NAD(P)-binding Rossmann-like Domain"/>
    <property type="match status" value="1"/>
</dbReference>
<dbReference type="HAMAP" id="MF_00222">
    <property type="entry name" value="Shikimate_DH_AroE"/>
    <property type="match status" value="1"/>
</dbReference>
<dbReference type="InterPro" id="IPR046346">
    <property type="entry name" value="Aminoacid_DH-like_N_sf"/>
</dbReference>
<dbReference type="InterPro" id="IPR036291">
    <property type="entry name" value="NAD(P)-bd_dom_sf"/>
</dbReference>
<dbReference type="InterPro" id="IPR041121">
    <property type="entry name" value="SDH_C"/>
</dbReference>
<dbReference type="InterPro" id="IPR011342">
    <property type="entry name" value="Shikimate_DH"/>
</dbReference>
<dbReference type="InterPro" id="IPR013708">
    <property type="entry name" value="Shikimate_DH-bd_N"/>
</dbReference>
<dbReference type="InterPro" id="IPR022893">
    <property type="entry name" value="Shikimate_DH_fam"/>
</dbReference>
<dbReference type="InterPro" id="IPR006151">
    <property type="entry name" value="Shikm_DH/Glu-tRNA_Rdtase"/>
</dbReference>
<dbReference type="NCBIfam" id="TIGR00507">
    <property type="entry name" value="aroE"/>
    <property type="match status" value="1"/>
</dbReference>
<dbReference type="NCBIfam" id="NF001310">
    <property type="entry name" value="PRK00258.1-2"/>
    <property type="match status" value="1"/>
</dbReference>
<dbReference type="PANTHER" id="PTHR21089:SF1">
    <property type="entry name" value="BIFUNCTIONAL 3-DEHYDROQUINATE DEHYDRATASE_SHIKIMATE DEHYDROGENASE, CHLOROPLASTIC"/>
    <property type="match status" value="1"/>
</dbReference>
<dbReference type="PANTHER" id="PTHR21089">
    <property type="entry name" value="SHIKIMATE DEHYDROGENASE"/>
    <property type="match status" value="1"/>
</dbReference>
<dbReference type="Pfam" id="PF18317">
    <property type="entry name" value="SDH_C"/>
    <property type="match status" value="1"/>
</dbReference>
<dbReference type="Pfam" id="PF01488">
    <property type="entry name" value="Shikimate_DH"/>
    <property type="match status" value="1"/>
</dbReference>
<dbReference type="Pfam" id="PF08501">
    <property type="entry name" value="Shikimate_dh_N"/>
    <property type="match status" value="1"/>
</dbReference>
<dbReference type="SUPFAM" id="SSF53223">
    <property type="entry name" value="Aminoacid dehydrogenase-like, N-terminal domain"/>
    <property type="match status" value="1"/>
</dbReference>
<dbReference type="SUPFAM" id="SSF51735">
    <property type="entry name" value="NAD(P)-binding Rossmann-fold domains"/>
    <property type="match status" value="1"/>
</dbReference>
<reference key="1">
    <citation type="journal article" date="2009" name="PLoS Genet.">
        <title>Organised genome dynamics in the Escherichia coli species results in highly diverse adaptive paths.</title>
        <authorList>
            <person name="Touchon M."/>
            <person name="Hoede C."/>
            <person name="Tenaillon O."/>
            <person name="Barbe V."/>
            <person name="Baeriswyl S."/>
            <person name="Bidet P."/>
            <person name="Bingen E."/>
            <person name="Bonacorsi S."/>
            <person name="Bouchier C."/>
            <person name="Bouvet O."/>
            <person name="Calteau A."/>
            <person name="Chiapello H."/>
            <person name="Clermont O."/>
            <person name="Cruveiller S."/>
            <person name="Danchin A."/>
            <person name="Diard M."/>
            <person name="Dossat C."/>
            <person name="Karoui M.E."/>
            <person name="Frapy E."/>
            <person name="Garry L."/>
            <person name="Ghigo J.M."/>
            <person name="Gilles A.M."/>
            <person name="Johnson J."/>
            <person name="Le Bouguenec C."/>
            <person name="Lescat M."/>
            <person name="Mangenot S."/>
            <person name="Martinez-Jehanne V."/>
            <person name="Matic I."/>
            <person name="Nassif X."/>
            <person name="Oztas S."/>
            <person name="Petit M.A."/>
            <person name="Pichon C."/>
            <person name="Rouy Z."/>
            <person name="Ruf C.S."/>
            <person name="Schneider D."/>
            <person name="Tourret J."/>
            <person name="Vacherie B."/>
            <person name="Vallenet D."/>
            <person name="Medigue C."/>
            <person name="Rocha E.P.C."/>
            <person name="Denamur E."/>
        </authorList>
    </citation>
    <scope>NUCLEOTIDE SEQUENCE [LARGE SCALE GENOMIC DNA]</scope>
    <source>
        <strain>IAI1</strain>
    </source>
</reference>
<evidence type="ECO:0000255" key="1">
    <source>
        <dbReference type="HAMAP-Rule" id="MF_00222"/>
    </source>
</evidence>
<name>AROE_ECO8A</name>
<proteinExistence type="inferred from homology"/>